<reference evidence="11 12" key="1">
    <citation type="journal article" date="1995" name="Mol. Cell. Biol.">
        <title>New retinoid X receptor subtypes in zebra fish (Danio rerio) differentially modulate transcription and do not bind 9-cis retinoic acid.</title>
        <authorList>
            <person name="Jones B.B."/>
            <person name="Ohno C.K."/>
            <person name="Allenby G."/>
            <person name="Boffa M.B."/>
            <person name="Levin A.A."/>
            <person name="Grippo J.F."/>
            <person name="Petkovich M."/>
        </authorList>
    </citation>
    <scope>NUCLEOTIDE SEQUENCE [MRNA]</scope>
    <scope>FUNCTION</scope>
    <scope>DEVELOPMENTAL STAGE</scope>
</reference>
<reference key="2">
    <citation type="journal article" date="2006" name="Gene Expr. Patterns">
        <title>Characterization of retinoid-X receptor genes rxra, rxrba, rxrbb and rxrg during zebrafish development.</title>
        <authorList>
            <person name="Tallafuss A."/>
            <person name="Hale L.A."/>
            <person name="Yan Y.-L."/>
            <person name="Dudley L."/>
            <person name="Eisen J.S."/>
            <person name="Postlethwait J.H."/>
        </authorList>
    </citation>
    <scope>TISSUE SPECIFICITY</scope>
    <scope>DEVELOPMENTAL STAGE</scope>
</reference>
<reference key="3">
    <citation type="journal article" date="2007" name="Dev. Dyn.">
        <title>Comparison of the expression patterns of newly identified zebrafish retinoic acid and retinoid X receptors.</title>
        <authorList>
            <person name="Waxman J.S."/>
            <person name="Yelon D."/>
        </authorList>
    </citation>
    <scope>TISSUE SPECIFICITY</scope>
    <scope>DEVELOPMENTAL STAGE</scope>
</reference>
<reference key="4">
    <citation type="journal article" date="2007" name="PLoS Genet.">
        <title>Unexpected novel relational links uncovered by extensive developmental profiling of nuclear receptor expression.</title>
        <authorList>
            <person name="Bertrand S."/>
            <person name="Thisse B."/>
            <person name="Tavares R."/>
            <person name="Sachs L."/>
            <person name="Chaumot A."/>
            <person name="Bardet P.-L."/>
            <person name="Escriva H."/>
            <person name="Duffraisse M."/>
            <person name="Marchand O."/>
            <person name="Safi R."/>
            <person name="Thisse C."/>
            <person name="Laudet V."/>
        </authorList>
    </citation>
    <scope>DEVELOPMENTAL STAGE</scope>
</reference>
<feature type="chain" id="PRO_0000053579" description="Retinoic acid receptor RXR-alpha-B">
    <location>
        <begin position="1"/>
        <end position="379"/>
    </location>
</feature>
<feature type="domain" description="NR LBD" evidence="5">
    <location>
        <begin position="144"/>
        <end position="375"/>
    </location>
</feature>
<feature type="DNA-binding region" description="Nuclear receptor" evidence="4">
    <location>
        <begin position="51"/>
        <end position="126"/>
    </location>
</feature>
<feature type="zinc finger region" description="NR C4-type" evidence="4">
    <location>
        <begin position="54"/>
        <end position="74"/>
    </location>
</feature>
<feature type="zinc finger region" description="NR C4-type" evidence="4">
    <location>
        <begin position="90"/>
        <end position="109"/>
    </location>
</feature>
<feature type="region of interest" description="Modulating" evidence="1">
    <location>
        <begin position="1"/>
        <end position="53"/>
    </location>
</feature>
<feature type="region of interest" description="Disordered" evidence="6">
    <location>
        <begin position="1"/>
        <end position="24"/>
    </location>
</feature>
<feature type="region of interest" description="Nuclear localization signal" evidence="2">
    <location>
        <begin position="79"/>
        <end position="84"/>
    </location>
</feature>
<feature type="region of interest" description="Hinge" evidence="1">
    <location>
        <begin position="120"/>
        <end position="141"/>
    </location>
</feature>
<feature type="region of interest" description="Required for nuclear export" evidence="2">
    <location>
        <begin position="265"/>
        <end position="285"/>
    </location>
</feature>
<feature type="region of interest" description="AF-2" evidence="5">
    <location>
        <begin position="364"/>
        <end position="375"/>
    </location>
</feature>
<feature type="compositionally biased region" description="Polar residues" evidence="6">
    <location>
        <begin position="1"/>
        <end position="22"/>
    </location>
</feature>
<feature type="binding site" evidence="2">
    <location>
        <position position="54"/>
    </location>
    <ligand>
        <name>Zn(2+)</name>
        <dbReference type="ChEBI" id="CHEBI:29105"/>
        <label>1</label>
    </ligand>
</feature>
<feature type="binding site" evidence="2">
    <location>
        <position position="57"/>
    </location>
    <ligand>
        <name>Zn(2+)</name>
        <dbReference type="ChEBI" id="CHEBI:29105"/>
        <label>1</label>
    </ligand>
</feature>
<feature type="binding site" evidence="2">
    <location>
        <position position="71"/>
    </location>
    <ligand>
        <name>Zn(2+)</name>
        <dbReference type="ChEBI" id="CHEBI:29105"/>
        <label>1</label>
    </ligand>
</feature>
<feature type="binding site" evidence="2">
    <location>
        <position position="74"/>
    </location>
    <ligand>
        <name>Zn(2+)</name>
        <dbReference type="ChEBI" id="CHEBI:29105"/>
        <label>1</label>
    </ligand>
</feature>
<feature type="binding site" evidence="2">
    <location>
        <position position="90"/>
    </location>
    <ligand>
        <name>Zn(2+)</name>
        <dbReference type="ChEBI" id="CHEBI:29105"/>
        <label>2</label>
    </ligand>
</feature>
<feature type="binding site" evidence="2">
    <location>
        <position position="96"/>
    </location>
    <ligand>
        <name>Zn(2+)</name>
        <dbReference type="ChEBI" id="CHEBI:29105"/>
        <label>2</label>
    </ligand>
</feature>
<feature type="binding site" evidence="2">
    <location>
        <position position="106"/>
    </location>
    <ligand>
        <name>Zn(2+)</name>
        <dbReference type="ChEBI" id="CHEBI:29105"/>
        <label>2</label>
    </ligand>
</feature>
<feature type="binding site" evidence="2">
    <location>
        <position position="109"/>
    </location>
    <ligand>
        <name>Zn(2+)</name>
        <dbReference type="ChEBI" id="CHEBI:29105"/>
        <label>2</label>
    </ligand>
</feature>
<feature type="binding site" evidence="2">
    <location>
        <position position="233"/>
    </location>
    <ligand>
        <name>9-cis-retinoate</name>
        <dbReference type="ChEBI" id="CHEBI:78630"/>
    </ligand>
</feature>
<feature type="binding site" evidence="2">
    <location>
        <position position="233"/>
    </location>
    <ligand>
        <name>all-trans-retinoate</name>
        <dbReference type="ChEBI" id="CHEBI:35291"/>
    </ligand>
</feature>
<feature type="binding site" evidence="2">
    <location>
        <position position="244"/>
    </location>
    <ligand>
        <name>9-cis-retinoate</name>
        <dbReference type="ChEBI" id="CHEBI:78630"/>
    </ligand>
</feature>
<feature type="binding site" evidence="2">
    <location>
        <position position="244"/>
    </location>
    <ligand>
        <name>all-trans-retinoate</name>
        <dbReference type="ChEBI" id="CHEBI:35291"/>
    </ligand>
</feature>
<protein>
    <recommendedName>
        <fullName>Retinoic acid receptor RXR-alpha-B</fullName>
    </recommendedName>
    <alternativeName>
        <fullName>Nuclear receptor subfamily 2 group B member 1-B</fullName>
    </alternativeName>
    <alternativeName>
        <fullName>Retinoid X receptor alpha-B</fullName>
    </alternativeName>
</protein>
<name>RXRAB_DANRE</name>
<organism>
    <name type="scientific">Danio rerio</name>
    <name type="common">Zebrafish</name>
    <name type="synonym">Brachydanio rerio</name>
    <dbReference type="NCBI Taxonomy" id="7955"/>
    <lineage>
        <taxon>Eukaryota</taxon>
        <taxon>Metazoa</taxon>
        <taxon>Chordata</taxon>
        <taxon>Craniata</taxon>
        <taxon>Vertebrata</taxon>
        <taxon>Euteleostomi</taxon>
        <taxon>Actinopterygii</taxon>
        <taxon>Neopterygii</taxon>
        <taxon>Teleostei</taxon>
        <taxon>Ostariophysi</taxon>
        <taxon>Cypriniformes</taxon>
        <taxon>Danionidae</taxon>
        <taxon>Danioninae</taxon>
        <taxon>Danio</taxon>
    </lineage>
</organism>
<evidence type="ECO:0000250" key="1"/>
<evidence type="ECO:0000250" key="2">
    <source>
        <dbReference type="UniProtKB" id="P19793"/>
    </source>
</evidence>
<evidence type="ECO:0000255" key="3"/>
<evidence type="ECO:0000255" key="4">
    <source>
        <dbReference type="PROSITE-ProRule" id="PRU00407"/>
    </source>
</evidence>
<evidence type="ECO:0000255" key="5">
    <source>
        <dbReference type="PROSITE-ProRule" id="PRU01189"/>
    </source>
</evidence>
<evidence type="ECO:0000256" key="6">
    <source>
        <dbReference type="SAM" id="MobiDB-lite"/>
    </source>
</evidence>
<evidence type="ECO:0000269" key="7">
    <source>
    </source>
</evidence>
<evidence type="ECO:0000269" key="8">
    <source>
    </source>
</evidence>
<evidence type="ECO:0000269" key="9">
    <source>
    </source>
</evidence>
<evidence type="ECO:0000269" key="10">
    <source>
    </source>
</evidence>
<evidence type="ECO:0000305" key="11"/>
<evidence type="ECO:0000312" key="12">
    <source>
        <dbReference type="EMBL" id="AAC59719.1"/>
    </source>
</evidence>
<comment type="function">
    <text evidence="2 10">Receptor for retinoic acid that acts as a transcription factor (PubMed:7565671). Forms homo- or heterodimers with retinoic acid receptors (rars) and binds to target response elements in response to their ligands, all-trans or 9-cis retinoic acid, to regulate gene expression in various biological processes (By similarity). The rar/rxr heterodimers bind to the retinoic acid response elements (RARE) composed of tandem 5'-AGGTCA-3' sites known as DR1-DR5 to regulate transcription (By similarity). The high affinity ligand for rxrs is 9-cis retinoic acid (By similarity). In the absence of ligand, the rar/rxr heterodimers associate with a multiprotein complex containing transcription corepressors that induce histone deacetylation, chromatin condensation and transcriptional suppression (By similarity). On ligand binding, the corepressors dissociate from the receptors and coactivators are recruited leading to transcriptional activation (By similarity).</text>
</comment>
<comment type="subunit">
    <text evidence="2">Homodimer. Heterodimer; with a rar molecule. Binds DNA preferentially as a rar/rxr heterodimer.</text>
</comment>
<comment type="subcellular location">
    <subcellularLocation>
        <location evidence="4">Nucleus</location>
    </subcellularLocation>
</comment>
<comment type="tissue specificity">
    <text evidence="7 8">Uniform expression from the blastula to mid-gastrula stages. At 12 hours post-fertilization (hpf), expressed strongly in the tail and weakly elsewhere. At 24 hpf, weak expression in the forebrain, eyes and pharyngeal endoderm and continued expression in the tail mesoderm. At 48 hpf, anterior expression limited to ventral cells underlying the head, medial expression in the pectoral fin bud mesoderm and continued tail expression.</text>
</comment>
<comment type="developmental stage">
    <text evidence="7 8 9 10">Expressed both maternally and zygotically.</text>
</comment>
<comment type="domain">
    <text>Composed of three domains: a modulating N-terminal domain, a DNA-binding domain and a C-terminal ligand-binding domain.</text>
</comment>
<comment type="similarity">
    <text evidence="3">Belongs to the nuclear hormone receptor family. NR2 subfamily.</text>
</comment>
<sequence length="379" mass="42556">MPVPEQKQTVQLSSPMNAVSSSEDIKPPLGLNGVMKVPAHRIGTLSLSLTKHICAICGDRSSGKHYGVYSCEGCKGFFKRTVRKDLTYTCRDNKDCMIDKRQRNRCQYCRYQKCLAMGMKREAVQEERQRAKERSEAEFGGCANEDMPVEKILEAELAVEPKTETYVEANLSPSANSPNDPVTNICQAADKQLFTLVEWAKRIPHFSDLPLDDQVILLRAGWNELLIASFSHRSIAVKDGILLATGLHVHRNSAHTAGVGAIFDRVLTELVSKMRDMQMDKTELGCLRAIVLFNPDSKGLSNPSEVEALRERVYASLEAYCKHKYPDQPGRFAKLLLRLPALRSIGLKCLEHLFFFKLIGDTPIDTFLMEMLEAPHQIT</sequence>
<proteinExistence type="evidence at transcript level"/>
<accession>Q90415</accession>
<dbReference type="EMBL" id="U29894">
    <property type="protein sequence ID" value="AAC59719.1"/>
    <property type="molecule type" value="mRNA"/>
</dbReference>
<dbReference type="PIR" id="I50514">
    <property type="entry name" value="I50514"/>
</dbReference>
<dbReference type="RefSeq" id="NP_571228.1">
    <property type="nucleotide sequence ID" value="NM_131153.1"/>
</dbReference>
<dbReference type="SMR" id="Q90415"/>
<dbReference type="FunCoup" id="Q90415">
    <property type="interactions" value="221"/>
</dbReference>
<dbReference type="STRING" id="7955.ENSDARP00000004918"/>
<dbReference type="PaxDb" id="7955-ENSDARP00000004918"/>
<dbReference type="GeneID" id="793011"/>
<dbReference type="KEGG" id="dre:793011"/>
<dbReference type="AGR" id="ZFIN:ZDB-GENE-990415-243"/>
<dbReference type="CTD" id="793011"/>
<dbReference type="ZFIN" id="ZDB-GENE-990415-243">
    <property type="gene designation" value="rxrab"/>
</dbReference>
<dbReference type="eggNOG" id="KOG3575">
    <property type="taxonomic scope" value="Eukaryota"/>
</dbReference>
<dbReference type="InParanoid" id="Q90415"/>
<dbReference type="OrthoDB" id="5873264at2759"/>
<dbReference type="PhylomeDB" id="Q90415"/>
<dbReference type="SignaLink" id="Q90415"/>
<dbReference type="PRO" id="PR:Q90415"/>
<dbReference type="Proteomes" id="UP000000437">
    <property type="component" value="Chromosome 5"/>
</dbReference>
<dbReference type="GO" id="GO:0090575">
    <property type="term" value="C:RNA polymerase II transcription regulator complex"/>
    <property type="evidence" value="ECO:0000318"/>
    <property type="project" value="GO_Central"/>
</dbReference>
<dbReference type="GO" id="GO:0003700">
    <property type="term" value="F:DNA-binding transcription factor activity"/>
    <property type="evidence" value="ECO:0000250"/>
    <property type="project" value="UniProtKB"/>
</dbReference>
<dbReference type="GO" id="GO:0004879">
    <property type="term" value="F:nuclear receptor activity"/>
    <property type="evidence" value="ECO:0000314"/>
    <property type="project" value="ZFIN"/>
</dbReference>
<dbReference type="GO" id="GO:0003707">
    <property type="term" value="F:nuclear steroid receptor activity"/>
    <property type="evidence" value="ECO:0007669"/>
    <property type="project" value="InterPro"/>
</dbReference>
<dbReference type="GO" id="GO:0044323">
    <property type="term" value="F:retinoic acid-responsive element binding"/>
    <property type="evidence" value="ECO:0000318"/>
    <property type="project" value="GO_Central"/>
</dbReference>
<dbReference type="GO" id="GO:0008270">
    <property type="term" value="F:zinc ion binding"/>
    <property type="evidence" value="ECO:0007669"/>
    <property type="project" value="UniProtKB-KW"/>
</dbReference>
<dbReference type="GO" id="GO:0030154">
    <property type="term" value="P:cell differentiation"/>
    <property type="evidence" value="ECO:0000318"/>
    <property type="project" value="GO_Central"/>
</dbReference>
<dbReference type="GO" id="GO:0007399">
    <property type="term" value="P:nervous system development"/>
    <property type="evidence" value="ECO:0000318"/>
    <property type="project" value="GO_Central"/>
</dbReference>
<dbReference type="GO" id="GO:0045944">
    <property type="term" value="P:positive regulation of transcription by RNA polymerase II"/>
    <property type="evidence" value="ECO:0000250"/>
    <property type="project" value="UniProtKB"/>
</dbReference>
<dbReference type="GO" id="GO:0048384">
    <property type="term" value="P:retinoic acid receptor signaling pathway"/>
    <property type="evidence" value="ECO:0000318"/>
    <property type="project" value="GO_Central"/>
</dbReference>
<dbReference type="CDD" id="cd06956">
    <property type="entry name" value="NR_DBD_RXR"/>
    <property type="match status" value="1"/>
</dbReference>
<dbReference type="CDD" id="cd06943">
    <property type="entry name" value="NR_LBD_RXR_like"/>
    <property type="match status" value="1"/>
</dbReference>
<dbReference type="FunFam" id="1.10.565.10:FF:000002">
    <property type="entry name" value="Retinoic acid receptor RXR-alpha"/>
    <property type="match status" value="1"/>
</dbReference>
<dbReference type="FunFam" id="3.30.50.10:FF:000005">
    <property type="entry name" value="Retinoic acid receptor RXR-alpha"/>
    <property type="match status" value="1"/>
</dbReference>
<dbReference type="Gene3D" id="3.30.50.10">
    <property type="entry name" value="Erythroid Transcription Factor GATA-1, subunit A"/>
    <property type="match status" value="1"/>
</dbReference>
<dbReference type="Gene3D" id="1.10.565.10">
    <property type="entry name" value="Retinoid X Receptor"/>
    <property type="match status" value="1"/>
</dbReference>
<dbReference type="InterPro" id="IPR035500">
    <property type="entry name" value="NHR-like_dom_sf"/>
</dbReference>
<dbReference type="InterPro" id="IPR021780">
    <property type="entry name" value="Nuc_recep-AF1"/>
</dbReference>
<dbReference type="InterPro" id="IPR000536">
    <property type="entry name" value="Nucl_hrmn_rcpt_lig-bd"/>
</dbReference>
<dbReference type="InterPro" id="IPR050274">
    <property type="entry name" value="Nuclear_hormone_rcpt_NR2"/>
</dbReference>
<dbReference type="InterPro" id="IPR001723">
    <property type="entry name" value="Nuclear_hrmn_rcpt"/>
</dbReference>
<dbReference type="InterPro" id="IPR000003">
    <property type="entry name" value="Retinoid-X_rcpt/HNF4"/>
</dbReference>
<dbReference type="InterPro" id="IPR001628">
    <property type="entry name" value="Znf_hrmn_rcpt"/>
</dbReference>
<dbReference type="InterPro" id="IPR013088">
    <property type="entry name" value="Znf_NHR/GATA"/>
</dbReference>
<dbReference type="PANTHER" id="PTHR24083">
    <property type="entry name" value="NUCLEAR HORMONE RECEPTOR"/>
    <property type="match status" value="1"/>
</dbReference>
<dbReference type="Pfam" id="PF00104">
    <property type="entry name" value="Hormone_recep"/>
    <property type="match status" value="1"/>
</dbReference>
<dbReference type="Pfam" id="PF11825">
    <property type="entry name" value="Nuc_recep-AF1"/>
    <property type="match status" value="1"/>
</dbReference>
<dbReference type="Pfam" id="PF00105">
    <property type="entry name" value="zf-C4"/>
    <property type="match status" value="1"/>
</dbReference>
<dbReference type="PRINTS" id="PR00545">
    <property type="entry name" value="RETINOIDXR"/>
</dbReference>
<dbReference type="PRINTS" id="PR00398">
    <property type="entry name" value="STRDHORMONER"/>
</dbReference>
<dbReference type="PRINTS" id="PR00047">
    <property type="entry name" value="STROIDFINGER"/>
</dbReference>
<dbReference type="SMART" id="SM00430">
    <property type="entry name" value="HOLI"/>
    <property type="match status" value="1"/>
</dbReference>
<dbReference type="SMART" id="SM00399">
    <property type="entry name" value="ZnF_C4"/>
    <property type="match status" value="1"/>
</dbReference>
<dbReference type="SUPFAM" id="SSF57716">
    <property type="entry name" value="Glucocorticoid receptor-like (DNA-binding domain)"/>
    <property type="match status" value="1"/>
</dbReference>
<dbReference type="SUPFAM" id="SSF48508">
    <property type="entry name" value="Nuclear receptor ligand-binding domain"/>
    <property type="match status" value="1"/>
</dbReference>
<dbReference type="PROSITE" id="PS51843">
    <property type="entry name" value="NR_LBD"/>
    <property type="match status" value="1"/>
</dbReference>
<dbReference type="PROSITE" id="PS00031">
    <property type="entry name" value="NUCLEAR_REC_DBD_1"/>
    <property type="match status" value="1"/>
</dbReference>
<dbReference type="PROSITE" id="PS51030">
    <property type="entry name" value="NUCLEAR_REC_DBD_2"/>
    <property type="match status" value="1"/>
</dbReference>
<keyword id="KW-0238">DNA-binding</keyword>
<keyword id="KW-0479">Metal-binding</keyword>
<keyword id="KW-0539">Nucleus</keyword>
<keyword id="KW-0675">Receptor</keyword>
<keyword id="KW-1185">Reference proteome</keyword>
<keyword id="KW-0804">Transcription</keyword>
<keyword id="KW-0805">Transcription regulation</keyword>
<keyword id="KW-0862">Zinc</keyword>
<keyword id="KW-0863">Zinc-finger</keyword>
<gene>
    <name type="primary">rxrab</name>
    <name type="synonym">nr2b1b</name>
    <name type="synonym">rxra</name>
    <name type="synonym">rxrg</name>
</gene>